<keyword id="KW-0004">4Fe-4S</keyword>
<keyword id="KW-0997">Cell inner membrane</keyword>
<keyword id="KW-1003">Cell membrane</keyword>
<keyword id="KW-0249">Electron transport</keyword>
<keyword id="KW-0408">Iron</keyword>
<keyword id="KW-0411">Iron-sulfur</keyword>
<keyword id="KW-0472">Membrane</keyword>
<keyword id="KW-0479">Metal-binding</keyword>
<keyword id="KW-0677">Repeat</keyword>
<keyword id="KW-1278">Translocase</keyword>
<keyword id="KW-0813">Transport</keyword>
<organism>
    <name type="scientific">Escherichia coli (strain SMS-3-5 / SECEC)</name>
    <dbReference type="NCBI Taxonomy" id="439855"/>
    <lineage>
        <taxon>Bacteria</taxon>
        <taxon>Pseudomonadati</taxon>
        <taxon>Pseudomonadota</taxon>
        <taxon>Gammaproteobacteria</taxon>
        <taxon>Enterobacterales</taxon>
        <taxon>Enterobacteriaceae</taxon>
        <taxon>Escherichia</taxon>
    </lineage>
</organism>
<protein>
    <recommendedName>
        <fullName evidence="1">Ion-translocating oxidoreductase complex subunit C</fullName>
        <ecNumber evidence="1">7.-.-.-</ecNumber>
    </recommendedName>
    <alternativeName>
        <fullName evidence="1">Rsx electron transport complex subunit C</fullName>
    </alternativeName>
</protein>
<gene>
    <name evidence="1" type="primary">rsxC</name>
    <name type="synonym">rnfC</name>
    <name type="ordered locus">EcSMS35_1570</name>
</gene>
<name>RSXC_ECOSM</name>
<evidence type="ECO:0000255" key="1">
    <source>
        <dbReference type="HAMAP-Rule" id="MF_00461"/>
    </source>
</evidence>
<evidence type="ECO:0000256" key="2">
    <source>
        <dbReference type="SAM" id="MobiDB-lite"/>
    </source>
</evidence>
<comment type="function">
    <text evidence="1">Part of a membrane-bound complex that couples electron transfer with translocation of ions across the membrane. Required to maintain the reduced state of SoxR.</text>
</comment>
<comment type="cofactor">
    <cofactor evidence="1">
        <name>[4Fe-4S] cluster</name>
        <dbReference type="ChEBI" id="CHEBI:49883"/>
    </cofactor>
    <text evidence="1">Binds 2 [4Fe-4S] clusters per subunit.</text>
</comment>
<comment type="subunit">
    <text evidence="1">The complex is composed of six subunits: RsxA, RsxB, RsxC, RsxD, RsxE and RsxG.</text>
</comment>
<comment type="subcellular location">
    <subcellularLocation>
        <location evidence="1">Cell inner membrane</location>
        <topology evidence="1">Peripheral membrane protein</topology>
    </subcellularLocation>
</comment>
<comment type="similarity">
    <text evidence="1">Belongs to the 4Fe4S bacterial-type ferredoxin family. RnfC subfamily.</text>
</comment>
<feature type="chain" id="PRO_1000194510" description="Ion-translocating oxidoreductase complex subunit C">
    <location>
        <begin position="1"/>
        <end position="676"/>
    </location>
</feature>
<feature type="domain" description="4Fe-4S ferredoxin-type 1" evidence="1">
    <location>
        <begin position="369"/>
        <end position="397"/>
    </location>
</feature>
<feature type="domain" description="4Fe-4S ferredoxin-type 2" evidence="1">
    <location>
        <begin position="407"/>
        <end position="436"/>
    </location>
</feature>
<feature type="region of interest" description="Disordered" evidence="2">
    <location>
        <begin position="600"/>
        <end position="652"/>
    </location>
</feature>
<feature type="compositionally biased region" description="Low complexity" evidence="2">
    <location>
        <begin position="605"/>
        <end position="615"/>
    </location>
</feature>
<feature type="binding site" evidence="1">
    <location>
        <position position="377"/>
    </location>
    <ligand>
        <name>[4Fe-4S] cluster</name>
        <dbReference type="ChEBI" id="CHEBI:49883"/>
        <label>1</label>
    </ligand>
</feature>
<feature type="binding site" evidence="1">
    <location>
        <position position="380"/>
    </location>
    <ligand>
        <name>[4Fe-4S] cluster</name>
        <dbReference type="ChEBI" id="CHEBI:49883"/>
        <label>1</label>
    </ligand>
</feature>
<feature type="binding site" evidence="1">
    <location>
        <position position="383"/>
    </location>
    <ligand>
        <name>[4Fe-4S] cluster</name>
        <dbReference type="ChEBI" id="CHEBI:49883"/>
        <label>1</label>
    </ligand>
</feature>
<feature type="binding site" evidence="1">
    <location>
        <position position="387"/>
    </location>
    <ligand>
        <name>[4Fe-4S] cluster</name>
        <dbReference type="ChEBI" id="CHEBI:49883"/>
        <label>2</label>
    </ligand>
</feature>
<feature type="binding site" evidence="1">
    <location>
        <position position="416"/>
    </location>
    <ligand>
        <name>[4Fe-4S] cluster</name>
        <dbReference type="ChEBI" id="CHEBI:49883"/>
        <label>2</label>
    </ligand>
</feature>
<feature type="binding site" evidence="1">
    <location>
        <position position="419"/>
    </location>
    <ligand>
        <name>[4Fe-4S] cluster</name>
        <dbReference type="ChEBI" id="CHEBI:49883"/>
        <label>2</label>
    </ligand>
</feature>
<feature type="binding site" evidence="1">
    <location>
        <position position="422"/>
    </location>
    <ligand>
        <name>[4Fe-4S] cluster</name>
        <dbReference type="ChEBI" id="CHEBI:49883"/>
        <label>2</label>
    </ligand>
</feature>
<feature type="binding site" evidence="1">
    <location>
        <position position="426"/>
    </location>
    <ligand>
        <name>[4Fe-4S] cluster</name>
        <dbReference type="ChEBI" id="CHEBI:49883"/>
        <label>1</label>
    </ligand>
</feature>
<dbReference type="EC" id="7.-.-.-" evidence="1"/>
<dbReference type="EMBL" id="CP000970">
    <property type="protein sequence ID" value="ACB18249.1"/>
    <property type="molecule type" value="Genomic_DNA"/>
</dbReference>
<dbReference type="RefSeq" id="WP_000915807.1">
    <property type="nucleotide sequence ID" value="NC_010498.1"/>
</dbReference>
<dbReference type="SMR" id="B1LEQ7"/>
<dbReference type="KEGG" id="ecm:EcSMS35_1570"/>
<dbReference type="HOGENOM" id="CLU_010808_2_1_6"/>
<dbReference type="Proteomes" id="UP000007011">
    <property type="component" value="Chromosome"/>
</dbReference>
<dbReference type="GO" id="GO:0005886">
    <property type="term" value="C:plasma membrane"/>
    <property type="evidence" value="ECO:0007669"/>
    <property type="project" value="UniProtKB-SubCell"/>
</dbReference>
<dbReference type="GO" id="GO:0051539">
    <property type="term" value="F:4 iron, 4 sulfur cluster binding"/>
    <property type="evidence" value="ECO:0007669"/>
    <property type="project" value="UniProtKB-KW"/>
</dbReference>
<dbReference type="GO" id="GO:0009055">
    <property type="term" value="F:electron transfer activity"/>
    <property type="evidence" value="ECO:0007669"/>
    <property type="project" value="InterPro"/>
</dbReference>
<dbReference type="GO" id="GO:0046872">
    <property type="term" value="F:metal ion binding"/>
    <property type="evidence" value="ECO:0007669"/>
    <property type="project" value="UniProtKB-KW"/>
</dbReference>
<dbReference type="GO" id="GO:0022900">
    <property type="term" value="P:electron transport chain"/>
    <property type="evidence" value="ECO:0007669"/>
    <property type="project" value="UniProtKB-UniRule"/>
</dbReference>
<dbReference type="Gene3D" id="3.30.70.20">
    <property type="match status" value="1"/>
</dbReference>
<dbReference type="Gene3D" id="3.40.50.11540">
    <property type="entry name" value="NADH-ubiquinone oxidoreductase 51kDa subunit"/>
    <property type="match status" value="1"/>
</dbReference>
<dbReference type="HAMAP" id="MF_00461">
    <property type="entry name" value="RsxC_RnfC"/>
    <property type="match status" value="1"/>
</dbReference>
<dbReference type="InterPro" id="IPR017896">
    <property type="entry name" value="4Fe4S_Fe-S-bd"/>
</dbReference>
<dbReference type="InterPro" id="IPR017900">
    <property type="entry name" value="4Fe4S_Fe_S_CS"/>
</dbReference>
<dbReference type="InterPro" id="IPR010208">
    <property type="entry name" value="Ion_transpt_RnfC/RsxC"/>
</dbReference>
<dbReference type="InterPro" id="IPR011538">
    <property type="entry name" value="Nuo51_FMN-bd"/>
</dbReference>
<dbReference type="InterPro" id="IPR037225">
    <property type="entry name" value="Nuo51_FMN-bd_sf"/>
</dbReference>
<dbReference type="InterPro" id="IPR026902">
    <property type="entry name" value="RnfC_N"/>
</dbReference>
<dbReference type="InterPro" id="IPR019554">
    <property type="entry name" value="Soluble_ligand-bd"/>
</dbReference>
<dbReference type="NCBIfam" id="NF003454">
    <property type="entry name" value="PRK05035.1"/>
    <property type="match status" value="1"/>
</dbReference>
<dbReference type="NCBIfam" id="TIGR01945">
    <property type="entry name" value="rnfC"/>
    <property type="match status" value="1"/>
</dbReference>
<dbReference type="PANTHER" id="PTHR43034">
    <property type="entry name" value="ION-TRANSLOCATING OXIDOREDUCTASE COMPLEX SUBUNIT C"/>
    <property type="match status" value="1"/>
</dbReference>
<dbReference type="PANTHER" id="PTHR43034:SF2">
    <property type="entry name" value="ION-TRANSLOCATING OXIDOREDUCTASE COMPLEX SUBUNIT C"/>
    <property type="match status" value="1"/>
</dbReference>
<dbReference type="Pfam" id="PF01512">
    <property type="entry name" value="Complex1_51K"/>
    <property type="match status" value="1"/>
</dbReference>
<dbReference type="Pfam" id="PF12838">
    <property type="entry name" value="Fer4_7"/>
    <property type="match status" value="1"/>
</dbReference>
<dbReference type="Pfam" id="PF13375">
    <property type="entry name" value="RnfC_N"/>
    <property type="match status" value="1"/>
</dbReference>
<dbReference type="Pfam" id="PF10531">
    <property type="entry name" value="SLBB"/>
    <property type="match status" value="1"/>
</dbReference>
<dbReference type="SUPFAM" id="SSF46548">
    <property type="entry name" value="alpha-helical ferredoxin"/>
    <property type="match status" value="1"/>
</dbReference>
<dbReference type="SUPFAM" id="SSF142019">
    <property type="entry name" value="Nqo1 FMN-binding domain-like"/>
    <property type="match status" value="1"/>
</dbReference>
<dbReference type="PROSITE" id="PS00198">
    <property type="entry name" value="4FE4S_FER_1"/>
    <property type="match status" value="2"/>
</dbReference>
<dbReference type="PROSITE" id="PS51379">
    <property type="entry name" value="4FE4S_FER_2"/>
    <property type="match status" value="2"/>
</dbReference>
<proteinExistence type="inferred from homology"/>
<reference key="1">
    <citation type="journal article" date="2008" name="J. Bacteriol.">
        <title>Insights into the environmental resistance gene pool from the genome sequence of the multidrug-resistant environmental isolate Escherichia coli SMS-3-5.</title>
        <authorList>
            <person name="Fricke W.F."/>
            <person name="Wright M.S."/>
            <person name="Lindell A.H."/>
            <person name="Harkins D.M."/>
            <person name="Baker-Austin C."/>
            <person name="Ravel J."/>
            <person name="Stepanauskas R."/>
        </authorList>
    </citation>
    <scope>NUCLEOTIDE SEQUENCE [LARGE SCALE GENOMIC DNA]</scope>
    <source>
        <strain>SMS-3-5 / SECEC</strain>
    </source>
</reference>
<accession>B1LEQ7</accession>
<sequence>MLKLFSAFRKNKIWDFNGGIHPPEMKTQSNGTPLRQVPLAQRFVIPLKQHIGAEGELCVSVGDKVLRGQPLTRGRGKMLPVHAPTSGTVTAIAPHSTAHPSALAELSVIIDADGEDCWIPRDGWDDYRSRSREELIERIHQFGVAGLGGAGFPTGVKLQGGGDKIETLIINAAECEPYITADDRLMQDCAAQVVEGIRILAHILQPREILIGIEDNKPQAISMLRAVLADSHDISLRVIPTKYPSGGAKQLTYILTGKQVPHGGRSSDIGVLMQNVGTAYAVKRAVIDGEPITERVVTLTGEAIARPGNVWARLGTPVRHLLNDAGFCPSADQMVIMGGPLMGFTLPWLDVPVVKITNCLLAPSANELGEPQEEQNCIRCSACADACPADLLPQQLYWFSKGQQHDKATTHNIADCIECGACAWVCPSNIPLVQYFRQEKAEIAAIRQEEKRAAEAKARFEARQARLEREKAARLERHKSAAVQPAAKDKDAIAAALARVKEKQAQATQPIVIKAGERPDNSAIIAAREARKAQARAKQAELQQTNDAATVADPRKTAVEAAIARAKARKLEQQQANAEPEQQVDPRKAAVEAAIARAKARKLEQQQANAEPEQQVDPRKAAVEAAIARAKARKLEQQQANAEPEEQVDPRKAAVAAAIARVQAKKAAQQKVVNED</sequence>